<reference key="1">
    <citation type="submission" date="2005-03" db="EMBL/GenBank/DDBJ databases">
        <title>Annotation of the Saccharomyces cerevisiae RM11-1a genome.</title>
        <authorList>
            <consortium name="The Broad Institute Genome Sequencing Platform"/>
            <person name="Birren B.W."/>
            <person name="Lander E.S."/>
            <person name="Galagan J.E."/>
            <person name="Nusbaum C."/>
            <person name="Devon K."/>
            <person name="Cuomo C."/>
            <person name="Jaffe D.B."/>
            <person name="Butler J."/>
            <person name="Alvarez P."/>
            <person name="Gnerre S."/>
            <person name="Grabherr M."/>
            <person name="Kleber M."/>
            <person name="Mauceli E.W."/>
            <person name="Brockman W."/>
            <person name="MacCallum I.A."/>
            <person name="Rounsley S."/>
            <person name="Young S.K."/>
            <person name="LaButti K."/>
            <person name="Pushparaj V."/>
            <person name="DeCaprio D."/>
            <person name="Crawford M."/>
            <person name="Koehrsen M."/>
            <person name="Engels R."/>
            <person name="Montgomery P."/>
            <person name="Pearson M."/>
            <person name="Howarth C."/>
            <person name="Larson L."/>
            <person name="Luoma S."/>
            <person name="White J."/>
            <person name="O'Leary S."/>
            <person name="Kodira C.D."/>
            <person name="Zeng Q."/>
            <person name="Yandava C."/>
            <person name="Alvarado L."/>
            <person name="Pratt S."/>
            <person name="Kruglyak L."/>
        </authorList>
    </citation>
    <scope>NUCLEOTIDE SEQUENCE [LARGE SCALE GENOMIC DNA]</scope>
    <source>
        <strain>RM11-1a</strain>
    </source>
</reference>
<protein>
    <recommendedName>
        <fullName>DNA repair and recombination protein RDH54</fullName>
    </recommendedName>
    <alternativeName>
        <fullName>RAD homolog 54</fullName>
    </alternativeName>
    <alternativeName>
        <fullName>Recombination factor TID1</fullName>
    </alternativeName>
    <alternativeName>
        <fullName>Two hybrid interaction with DMC1 protein 1</fullName>
    </alternativeName>
    <domain>
        <recommendedName>
            <fullName>DNA topoisomerase</fullName>
            <ecNumber>5.99.1.-</ecNumber>
        </recommendedName>
    </domain>
    <domain>
        <recommendedName>
            <fullName>Putative helicase</fullName>
            <ecNumber>3.6.4.12</ecNumber>
        </recommendedName>
    </domain>
</protein>
<evidence type="ECO:0000250" key="1"/>
<evidence type="ECO:0000250" key="2">
    <source>
        <dbReference type="UniProtKB" id="P38086"/>
    </source>
</evidence>
<evidence type="ECO:0000255" key="3">
    <source>
        <dbReference type="PROSITE-ProRule" id="PRU00541"/>
    </source>
</evidence>
<evidence type="ECO:0000255" key="4">
    <source>
        <dbReference type="PROSITE-ProRule" id="PRU00542"/>
    </source>
</evidence>
<evidence type="ECO:0000256" key="5">
    <source>
        <dbReference type="SAM" id="MobiDB-lite"/>
    </source>
</evidence>
<evidence type="ECO:0000305" key="6"/>
<feature type="chain" id="PRO_0000393310" description="DNA repair and recombination protein RDH54">
    <location>
        <begin position="1"/>
        <end position="924"/>
    </location>
</feature>
<feature type="domain" description="Helicase ATP-binding" evidence="3">
    <location>
        <begin position="299"/>
        <end position="487"/>
    </location>
</feature>
<feature type="domain" description="Helicase C-terminal" evidence="4">
    <location>
        <begin position="631"/>
        <end position="790"/>
    </location>
</feature>
<feature type="region of interest" description="Disordered" evidence="5">
    <location>
        <begin position="1"/>
        <end position="21"/>
    </location>
</feature>
<feature type="region of interest" description="Disordered" evidence="5">
    <location>
        <begin position="155"/>
        <end position="183"/>
    </location>
</feature>
<feature type="short sequence motif" description="DEGH box">
    <location>
        <begin position="472"/>
        <end position="475"/>
    </location>
</feature>
<feature type="compositionally biased region" description="Basic and acidic residues" evidence="5">
    <location>
        <begin position="1"/>
        <end position="10"/>
    </location>
</feature>
<feature type="compositionally biased region" description="Low complexity" evidence="5">
    <location>
        <begin position="168"/>
        <end position="178"/>
    </location>
</feature>
<feature type="binding site" evidence="3">
    <location>
        <begin position="346"/>
        <end position="353"/>
    </location>
    <ligand>
        <name>ATP</name>
        <dbReference type="ChEBI" id="CHEBI:30616"/>
    </ligand>
</feature>
<feature type="cross-link" description="Glycyl lysine isopeptide (Lys-Gly) (interchain with G-Cter in ubiquitin)" evidence="2">
    <location>
        <position position="615"/>
    </location>
</feature>
<comment type="function">
    <text evidence="1">Involved in the recombinational repair of double-strand breaks (DSB) in DNA during mitosis and meiosis. Has DNA dependent ATPase activity. Promotes D-loop (displacement loop) formation with RAD51 recombinase. Modifies the topology of double-stranded DNA during the D-loop reaction to facilitate the invasion of the homologous duplex molecule by the initiating single-stranded DNA substrate. Required for adaptation from G2/M checkpoint arrest induced by a double strand break, by participating in monitoring the extent of single-stranded DNA produced by resection of DNA ends. This role is distinct from its roles in recombination. Promotes colocalization of RAD51 and DMC1 during meiotic recombination. Involved in crossover interference (By similarity).</text>
</comment>
<comment type="catalytic activity">
    <reaction>
        <text>ATP + H2O = ADP + phosphate + H(+)</text>
        <dbReference type="Rhea" id="RHEA:13065"/>
        <dbReference type="ChEBI" id="CHEBI:15377"/>
        <dbReference type="ChEBI" id="CHEBI:15378"/>
        <dbReference type="ChEBI" id="CHEBI:30616"/>
        <dbReference type="ChEBI" id="CHEBI:43474"/>
        <dbReference type="ChEBI" id="CHEBI:456216"/>
        <dbReference type="EC" id="3.6.4.12"/>
    </reaction>
</comment>
<comment type="subunit">
    <text evidence="1">Interacts with RAD51 and DMC1.</text>
</comment>
<comment type="subcellular location">
    <subcellularLocation>
        <location evidence="1">Nucleus</location>
    </subcellularLocation>
</comment>
<comment type="similarity">
    <text evidence="6">Belongs to the SNF2/RAD54 helicase family.</text>
</comment>
<gene>
    <name type="primary">RDH54</name>
    <name type="synonym">TID1</name>
    <name type="ORF">SCRG_02893</name>
</gene>
<accession>B3LN76</accession>
<name>RDH54_YEAS1</name>
<dbReference type="EC" id="5.99.1.-"/>
<dbReference type="EC" id="3.6.4.12"/>
<dbReference type="EMBL" id="CH408048">
    <property type="protein sequence ID" value="EDV12029.1"/>
    <property type="molecule type" value="Genomic_DNA"/>
</dbReference>
<dbReference type="SMR" id="B3LN76"/>
<dbReference type="HOGENOM" id="CLU_000315_10_1_1"/>
<dbReference type="OrthoDB" id="3905at4893"/>
<dbReference type="Proteomes" id="UP000008335">
    <property type="component" value="Unassembled WGS sequence"/>
</dbReference>
<dbReference type="GO" id="GO:0005634">
    <property type="term" value="C:nucleus"/>
    <property type="evidence" value="ECO:0007669"/>
    <property type="project" value="UniProtKB-SubCell"/>
</dbReference>
<dbReference type="GO" id="GO:0005524">
    <property type="term" value="F:ATP binding"/>
    <property type="evidence" value="ECO:0007669"/>
    <property type="project" value="UniProtKB-KW"/>
</dbReference>
<dbReference type="GO" id="GO:0016887">
    <property type="term" value="F:ATP hydrolysis activity"/>
    <property type="evidence" value="ECO:0007669"/>
    <property type="project" value="RHEA"/>
</dbReference>
<dbReference type="GO" id="GO:0003677">
    <property type="term" value="F:DNA binding"/>
    <property type="evidence" value="ECO:0007669"/>
    <property type="project" value="UniProtKB-KW"/>
</dbReference>
<dbReference type="GO" id="GO:0003916">
    <property type="term" value="F:DNA topoisomerase activity"/>
    <property type="evidence" value="ECO:0007669"/>
    <property type="project" value="UniProtKB-KW"/>
</dbReference>
<dbReference type="GO" id="GO:0015616">
    <property type="term" value="F:DNA translocase activity"/>
    <property type="evidence" value="ECO:0007669"/>
    <property type="project" value="TreeGrafter"/>
</dbReference>
<dbReference type="GO" id="GO:0004386">
    <property type="term" value="F:helicase activity"/>
    <property type="evidence" value="ECO:0007669"/>
    <property type="project" value="UniProtKB-KW"/>
</dbReference>
<dbReference type="GO" id="GO:0000724">
    <property type="term" value="P:double-strand break repair via homologous recombination"/>
    <property type="evidence" value="ECO:0007669"/>
    <property type="project" value="TreeGrafter"/>
</dbReference>
<dbReference type="GO" id="GO:0007131">
    <property type="term" value="P:reciprocal meiotic recombination"/>
    <property type="evidence" value="ECO:0007669"/>
    <property type="project" value="TreeGrafter"/>
</dbReference>
<dbReference type="CDD" id="cd18004">
    <property type="entry name" value="DEXHc_RAD54"/>
    <property type="match status" value="1"/>
</dbReference>
<dbReference type="CDD" id="cd18793">
    <property type="entry name" value="SF2_C_SNF"/>
    <property type="match status" value="1"/>
</dbReference>
<dbReference type="FunFam" id="3.40.50.10810:FF:000058">
    <property type="entry name" value="RDH54p DNA-dependent ATPase"/>
    <property type="match status" value="1"/>
</dbReference>
<dbReference type="Gene3D" id="3.40.50.300">
    <property type="entry name" value="P-loop containing nucleotide triphosphate hydrolases"/>
    <property type="match status" value="1"/>
</dbReference>
<dbReference type="Gene3D" id="1.20.120.850">
    <property type="entry name" value="SWI2/SNF2 ATPases, N-terminal domain"/>
    <property type="match status" value="1"/>
</dbReference>
<dbReference type="Gene3D" id="3.40.50.10810">
    <property type="entry name" value="Tandem AAA-ATPase domain"/>
    <property type="match status" value="1"/>
</dbReference>
<dbReference type="InterPro" id="IPR014001">
    <property type="entry name" value="Helicase_ATP-bd"/>
</dbReference>
<dbReference type="InterPro" id="IPR001650">
    <property type="entry name" value="Helicase_C-like"/>
</dbReference>
<dbReference type="InterPro" id="IPR027417">
    <property type="entry name" value="P-loop_NTPase"/>
</dbReference>
<dbReference type="InterPro" id="IPR038718">
    <property type="entry name" value="SNF2-like_sf"/>
</dbReference>
<dbReference type="InterPro" id="IPR049730">
    <property type="entry name" value="SNF2/RAD54-like_C"/>
</dbReference>
<dbReference type="InterPro" id="IPR000330">
    <property type="entry name" value="SNF2_N"/>
</dbReference>
<dbReference type="InterPro" id="IPR050496">
    <property type="entry name" value="SNF2_RAD54_helicase_repair"/>
</dbReference>
<dbReference type="PANTHER" id="PTHR45629:SF7">
    <property type="entry name" value="DNA EXCISION REPAIR PROTEIN ERCC-6-RELATED"/>
    <property type="match status" value="1"/>
</dbReference>
<dbReference type="PANTHER" id="PTHR45629">
    <property type="entry name" value="SNF2/RAD54 FAMILY MEMBER"/>
    <property type="match status" value="1"/>
</dbReference>
<dbReference type="Pfam" id="PF00271">
    <property type="entry name" value="Helicase_C"/>
    <property type="match status" value="1"/>
</dbReference>
<dbReference type="Pfam" id="PF00176">
    <property type="entry name" value="SNF2-rel_dom"/>
    <property type="match status" value="1"/>
</dbReference>
<dbReference type="SMART" id="SM00487">
    <property type="entry name" value="DEXDc"/>
    <property type="match status" value="1"/>
</dbReference>
<dbReference type="SMART" id="SM00490">
    <property type="entry name" value="HELICc"/>
    <property type="match status" value="1"/>
</dbReference>
<dbReference type="SUPFAM" id="SSF52540">
    <property type="entry name" value="P-loop containing nucleoside triphosphate hydrolases"/>
    <property type="match status" value="2"/>
</dbReference>
<dbReference type="PROSITE" id="PS51192">
    <property type="entry name" value="HELICASE_ATP_BIND_1"/>
    <property type="match status" value="1"/>
</dbReference>
<dbReference type="PROSITE" id="PS51194">
    <property type="entry name" value="HELICASE_CTER"/>
    <property type="match status" value="1"/>
</dbReference>
<proteinExistence type="inferred from homology"/>
<keyword id="KW-0067">ATP-binding</keyword>
<keyword id="KW-0227">DNA damage</keyword>
<keyword id="KW-0233">DNA recombination</keyword>
<keyword id="KW-0234">DNA repair</keyword>
<keyword id="KW-0238">DNA-binding</keyword>
<keyword id="KW-0347">Helicase</keyword>
<keyword id="KW-0378">Hydrolase</keyword>
<keyword id="KW-0413">Isomerase</keyword>
<keyword id="KW-1017">Isopeptide bond</keyword>
<keyword id="KW-0469">Meiosis</keyword>
<keyword id="KW-0547">Nucleotide-binding</keyword>
<keyword id="KW-0539">Nucleus</keyword>
<keyword id="KW-0799">Topoisomerase</keyword>
<keyword id="KW-0832">Ubl conjugation</keyword>
<sequence>MQIPKYENKPFKPPRRVGSNKYTQLKPTATAVTTAPISKAKVTVNLKRSISAGPTLNLAKKPNNLSSNENTRYFTIMYRKPTTKKHKTWSGDGYATLKASSDKLCFYNEAGKFLGSSMLPSDSDSLFETLFKAGSNEVQLDYELKENAEIRSAKEALSQNMGNPNPPTTSTTETVPSTKNDGGKYQMPLSQLFSLNTVKRFKSVTKQTNEHMTTVPKTSQNSKAKKYYPVFDVNKIDNPIVMNKNAAAEVDVIVDPLLGKFLRPHQREGVKFMYDCLMGLARPTIENPDIDCTTKSLVLENDSDISGCLLADDMGLGKTLMSITLIWTLIRQTPFASKVSCSQSGIPLTGLCKKILVVCPVTLIGNWKREFGKWLNLSRIGVLTLSSRNSPDMDKMAVRNFLKVQRTYQVLIIGYEKLLSVSEELEKNKHLIDMLVCDEGHRLKNGASKILNTLKSLDIRRKLLLTGTPIQNDLNEFFTIIDFINPGILGSFASFKRRFIIPITRARDTANRYNEELLEKGEERSKEMIEITKRFILRRTNAILEKYLPPKTDIILFCKPYSQQILAFKDILQGARLDFGRLTFSSSLGLITLLKKVCNSPGLVGSDPYYKSHIKDTQSQDSYSRSLNSGKLRVLMTLLEGIRKGTKEKVVVVSNYTQTLDIIENLMNMAGMSHCRLDGSIPAKQRDSIVTSFNRNPAIFGFLLSAKSGGVGLNLVGASRLILFDNDWNPSVDLQAMSRIHRDGQKKPCFIYRLVTTGCIDEKILQRQLMKNSLSQKFLGDSEMRNKESSNDDLFNKEDLKDLFSVHTDTKSNTHDLICSCDGLGEEIEYPETNQQQNTVELRKRSTTTWTSALDLQKKMNEAATNDDAKKSQYIRQCLVHYKHIDPARQDELFDEVITDSFTDLKDSITFAFVKPGEICLREQ</sequence>
<organism>
    <name type="scientific">Saccharomyces cerevisiae (strain RM11-1a)</name>
    <name type="common">Baker's yeast</name>
    <dbReference type="NCBI Taxonomy" id="285006"/>
    <lineage>
        <taxon>Eukaryota</taxon>
        <taxon>Fungi</taxon>
        <taxon>Dikarya</taxon>
        <taxon>Ascomycota</taxon>
        <taxon>Saccharomycotina</taxon>
        <taxon>Saccharomycetes</taxon>
        <taxon>Saccharomycetales</taxon>
        <taxon>Saccharomycetaceae</taxon>
        <taxon>Saccharomyces</taxon>
    </lineage>
</organism>